<feature type="chain" id="PRO_0000061568" description="Cytochrome b">
    <location>
        <begin position="1"/>
        <end position="379"/>
    </location>
</feature>
<feature type="transmembrane region" description="Helical" evidence="2">
    <location>
        <begin position="33"/>
        <end position="53"/>
    </location>
</feature>
<feature type="transmembrane region" description="Helical" evidence="2">
    <location>
        <begin position="77"/>
        <end position="98"/>
    </location>
</feature>
<feature type="transmembrane region" description="Helical" evidence="2">
    <location>
        <begin position="113"/>
        <end position="133"/>
    </location>
</feature>
<feature type="transmembrane region" description="Helical" evidence="2">
    <location>
        <begin position="178"/>
        <end position="198"/>
    </location>
</feature>
<feature type="transmembrane region" description="Helical" evidence="2">
    <location>
        <begin position="226"/>
        <end position="246"/>
    </location>
</feature>
<feature type="transmembrane region" description="Helical" evidence="2">
    <location>
        <begin position="288"/>
        <end position="308"/>
    </location>
</feature>
<feature type="transmembrane region" description="Helical" evidence="2">
    <location>
        <begin position="320"/>
        <end position="340"/>
    </location>
</feature>
<feature type="transmembrane region" description="Helical" evidence="2">
    <location>
        <begin position="347"/>
        <end position="367"/>
    </location>
</feature>
<feature type="binding site" description="axial binding residue" evidence="2">
    <location>
        <position position="83"/>
    </location>
    <ligand>
        <name>heme b</name>
        <dbReference type="ChEBI" id="CHEBI:60344"/>
        <label>b562</label>
    </ligand>
    <ligandPart>
        <name>Fe</name>
        <dbReference type="ChEBI" id="CHEBI:18248"/>
    </ligandPart>
</feature>
<feature type="binding site" description="axial binding residue" evidence="2">
    <location>
        <position position="97"/>
    </location>
    <ligand>
        <name>heme b</name>
        <dbReference type="ChEBI" id="CHEBI:60344"/>
        <label>b566</label>
    </ligand>
    <ligandPart>
        <name>Fe</name>
        <dbReference type="ChEBI" id="CHEBI:18248"/>
    </ligandPart>
</feature>
<feature type="binding site" description="axial binding residue" evidence="2">
    <location>
        <position position="182"/>
    </location>
    <ligand>
        <name>heme b</name>
        <dbReference type="ChEBI" id="CHEBI:60344"/>
        <label>b562</label>
    </ligand>
    <ligandPart>
        <name>Fe</name>
        <dbReference type="ChEBI" id="CHEBI:18248"/>
    </ligandPart>
</feature>
<feature type="binding site" description="axial binding residue" evidence="2">
    <location>
        <position position="196"/>
    </location>
    <ligand>
        <name>heme b</name>
        <dbReference type="ChEBI" id="CHEBI:60344"/>
        <label>b566</label>
    </ligand>
    <ligandPart>
        <name>Fe</name>
        <dbReference type="ChEBI" id="CHEBI:18248"/>
    </ligandPart>
</feature>
<feature type="binding site" evidence="2">
    <location>
        <position position="201"/>
    </location>
    <ligand>
        <name>a ubiquinone</name>
        <dbReference type="ChEBI" id="CHEBI:16389"/>
    </ligand>
</feature>
<feature type="sequence variant" description="In strain: Isolate PK 4847.">
    <original>M</original>
    <variation>V</variation>
    <location>
        <position position="108"/>
    </location>
</feature>
<feature type="sequence variant" description="In strain: Isolate PK 4847.">
    <original>I</original>
    <variation>V</variation>
    <location>
        <position position="238"/>
    </location>
</feature>
<reference key="1">
    <citation type="journal article" date="2003" name="J. Mammal.">
        <title>Phylogenetic diversification within shrews of the Sorex cinereus group (Soricidae).</title>
        <authorList>
            <person name="Demboski J.R."/>
            <person name="Cook J.A."/>
        </authorList>
    </citation>
    <scope>NUCLEOTIDE SEQUENCE [GENOMIC DNA]</scope>
    <source>
        <strain>Isolate NDM 3113</strain>
        <strain>Isolate PK 4847</strain>
    </source>
</reference>
<organism>
    <name type="scientific">Sorex longirostris</name>
    <name type="common">Southeastern shrew</name>
    <dbReference type="NCBI Taxonomy" id="144776"/>
    <lineage>
        <taxon>Eukaryota</taxon>
        <taxon>Metazoa</taxon>
        <taxon>Chordata</taxon>
        <taxon>Craniata</taxon>
        <taxon>Vertebrata</taxon>
        <taxon>Euteleostomi</taxon>
        <taxon>Mammalia</taxon>
        <taxon>Eutheria</taxon>
        <taxon>Laurasiatheria</taxon>
        <taxon>Eulipotyphla</taxon>
        <taxon>Soricidae</taxon>
        <taxon>Soricinae</taxon>
        <taxon>Sorex</taxon>
    </lineage>
</organism>
<comment type="function">
    <text evidence="2">Component of the ubiquinol-cytochrome c reductase complex (complex III or cytochrome b-c1 complex) that is part of the mitochondrial respiratory chain. The b-c1 complex mediates electron transfer from ubiquinol to cytochrome c. Contributes to the generation of a proton gradient across the mitochondrial membrane that is then used for ATP synthesis.</text>
</comment>
<comment type="cofactor">
    <cofactor evidence="2">
        <name>heme b</name>
        <dbReference type="ChEBI" id="CHEBI:60344"/>
    </cofactor>
    <text evidence="2">Binds 2 heme b groups non-covalently.</text>
</comment>
<comment type="subunit">
    <text evidence="2">The cytochrome bc1 complex contains 11 subunits: 3 respiratory subunits (MT-CYB, CYC1 and UQCRFS1), 2 core proteins (UQCRC1 and UQCRC2) and 6 low-molecular weight proteins (UQCRH/QCR6, UQCRB/QCR7, UQCRQ/QCR8, UQCR10/QCR9, UQCR11/QCR10 and a cleavage product of UQCRFS1). This cytochrome bc1 complex then forms a dimer.</text>
</comment>
<comment type="subcellular location">
    <subcellularLocation>
        <location evidence="2">Mitochondrion inner membrane</location>
        <topology evidence="2">Multi-pass membrane protein</topology>
    </subcellularLocation>
</comment>
<comment type="miscellaneous">
    <text evidence="1">Heme 1 (or BL or b562) is low-potential and absorbs at about 562 nm, and heme 2 (or BH or b566) is high-potential and absorbs at about 566 nm.</text>
</comment>
<comment type="similarity">
    <text evidence="3 4">Belongs to the cytochrome b family.</text>
</comment>
<comment type="caution">
    <text evidence="2">The full-length protein contains only eight transmembrane helices, not nine as predicted by bioinformatics tools.</text>
</comment>
<geneLocation type="mitochondrion"/>
<keyword id="KW-0249">Electron transport</keyword>
<keyword id="KW-0349">Heme</keyword>
<keyword id="KW-0408">Iron</keyword>
<keyword id="KW-0472">Membrane</keyword>
<keyword id="KW-0479">Metal-binding</keyword>
<keyword id="KW-0496">Mitochondrion</keyword>
<keyword id="KW-0999">Mitochondrion inner membrane</keyword>
<keyword id="KW-0679">Respiratory chain</keyword>
<keyword id="KW-0812">Transmembrane</keyword>
<keyword id="KW-1133">Transmembrane helix</keyword>
<keyword id="KW-0813">Transport</keyword>
<keyword id="KW-0830">Ubiquinone</keyword>
<proteinExistence type="inferred from homology"/>
<evidence type="ECO:0000250" key="1"/>
<evidence type="ECO:0000250" key="2">
    <source>
        <dbReference type="UniProtKB" id="P00157"/>
    </source>
</evidence>
<evidence type="ECO:0000255" key="3">
    <source>
        <dbReference type="PROSITE-ProRule" id="PRU00967"/>
    </source>
</evidence>
<evidence type="ECO:0000255" key="4">
    <source>
        <dbReference type="PROSITE-ProRule" id="PRU00968"/>
    </source>
</evidence>
<dbReference type="EMBL" id="AY014953">
    <property type="protein sequence ID" value="AAG40512.1"/>
    <property type="molecule type" value="Genomic_DNA"/>
</dbReference>
<dbReference type="EMBL" id="AY014954">
    <property type="protein sequence ID" value="AAG40513.1"/>
    <property type="molecule type" value="Genomic_DNA"/>
</dbReference>
<dbReference type="SMR" id="Q8SFK7"/>
<dbReference type="GO" id="GO:0005743">
    <property type="term" value="C:mitochondrial inner membrane"/>
    <property type="evidence" value="ECO:0007669"/>
    <property type="project" value="UniProtKB-SubCell"/>
</dbReference>
<dbReference type="GO" id="GO:0045275">
    <property type="term" value="C:respiratory chain complex III"/>
    <property type="evidence" value="ECO:0007669"/>
    <property type="project" value="InterPro"/>
</dbReference>
<dbReference type="GO" id="GO:0046872">
    <property type="term" value="F:metal ion binding"/>
    <property type="evidence" value="ECO:0007669"/>
    <property type="project" value="UniProtKB-KW"/>
</dbReference>
<dbReference type="GO" id="GO:0008121">
    <property type="term" value="F:ubiquinol-cytochrome-c reductase activity"/>
    <property type="evidence" value="ECO:0007669"/>
    <property type="project" value="InterPro"/>
</dbReference>
<dbReference type="GO" id="GO:0006122">
    <property type="term" value="P:mitochondrial electron transport, ubiquinol to cytochrome c"/>
    <property type="evidence" value="ECO:0007669"/>
    <property type="project" value="TreeGrafter"/>
</dbReference>
<dbReference type="CDD" id="cd00290">
    <property type="entry name" value="cytochrome_b_C"/>
    <property type="match status" value="1"/>
</dbReference>
<dbReference type="CDD" id="cd00284">
    <property type="entry name" value="Cytochrome_b_N"/>
    <property type="match status" value="1"/>
</dbReference>
<dbReference type="FunFam" id="1.20.810.10:FF:000002">
    <property type="entry name" value="Cytochrome b"/>
    <property type="match status" value="1"/>
</dbReference>
<dbReference type="Gene3D" id="1.20.810.10">
    <property type="entry name" value="Cytochrome Bc1 Complex, Chain C"/>
    <property type="match status" value="1"/>
</dbReference>
<dbReference type="InterPro" id="IPR005798">
    <property type="entry name" value="Cyt_b/b6_C"/>
</dbReference>
<dbReference type="InterPro" id="IPR036150">
    <property type="entry name" value="Cyt_b/b6_C_sf"/>
</dbReference>
<dbReference type="InterPro" id="IPR005797">
    <property type="entry name" value="Cyt_b/b6_N"/>
</dbReference>
<dbReference type="InterPro" id="IPR027387">
    <property type="entry name" value="Cytb/b6-like_sf"/>
</dbReference>
<dbReference type="InterPro" id="IPR030689">
    <property type="entry name" value="Cytochrome_b"/>
</dbReference>
<dbReference type="InterPro" id="IPR048260">
    <property type="entry name" value="Cytochrome_b_C_euk/bac"/>
</dbReference>
<dbReference type="InterPro" id="IPR048259">
    <property type="entry name" value="Cytochrome_b_N_euk/bac"/>
</dbReference>
<dbReference type="InterPro" id="IPR016174">
    <property type="entry name" value="Di-haem_cyt_TM"/>
</dbReference>
<dbReference type="PANTHER" id="PTHR19271">
    <property type="entry name" value="CYTOCHROME B"/>
    <property type="match status" value="1"/>
</dbReference>
<dbReference type="PANTHER" id="PTHR19271:SF16">
    <property type="entry name" value="CYTOCHROME B"/>
    <property type="match status" value="1"/>
</dbReference>
<dbReference type="Pfam" id="PF00032">
    <property type="entry name" value="Cytochrom_B_C"/>
    <property type="match status" value="1"/>
</dbReference>
<dbReference type="Pfam" id="PF00033">
    <property type="entry name" value="Cytochrome_B"/>
    <property type="match status" value="1"/>
</dbReference>
<dbReference type="PIRSF" id="PIRSF038885">
    <property type="entry name" value="COB"/>
    <property type="match status" value="1"/>
</dbReference>
<dbReference type="SUPFAM" id="SSF81648">
    <property type="entry name" value="a domain/subunit of cytochrome bc1 complex (Ubiquinol-cytochrome c reductase)"/>
    <property type="match status" value="1"/>
</dbReference>
<dbReference type="SUPFAM" id="SSF81342">
    <property type="entry name" value="Transmembrane di-heme cytochromes"/>
    <property type="match status" value="1"/>
</dbReference>
<dbReference type="PROSITE" id="PS51003">
    <property type="entry name" value="CYTB_CTER"/>
    <property type="match status" value="1"/>
</dbReference>
<dbReference type="PROSITE" id="PS51002">
    <property type="entry name" value="CYTB_NTER"/>
    <property type="match status" value="1"/>
</dbReference>
<name>CYB_SORLO</name>
<accession>Q8SFK7</accession>
<accession>Q8SFK6</accession>
<gene>
    <name type="primary">MT-CYB</name>
    <name type="synonym">COB</name>
    <name type="synonym">CYTB</name>
    <name type="synonym">MTCYB</name>
</gene>
<sequence>MTNLRKTHPLMKIINNSFIDLPTPSNISSWWNFGSLLGICLIVQILTGLFLAMHYTSDTMTAFSSVTHICRDVNYGWLIRYLHANGASMFFICLFLHVGRGLYYGSYMFLETWNIGVLLLFAVMATAFMGYVLPWGQMSFWGATVITNLLSAIPYIGSDLVEWIWGGFSVDKATLTRFFAFHFILPFIIAALAGVHLLFLHETGSNNPSGLCSDADKIPFHPYYTIKDILGILLLILILTSLVLFSPDLLGDPDNYTPANPLNTPPHIKPEWYFLFAYAILRSIPNKLGGVLALVLSILVLAVVPFLHTSKQRSMMFRPFSQCLFWILVADLLTLTWIGGQPVEHPFIIIGQLASILYFLLILVLMPITSLFENNLLKW</sequence>
<protein>
    <recommendedName>
        <fullName>Cytochrome b</fullName>
    </recommendedName>
    <alternativeName>
        <fullName>Complex III subunit 3</fullName>
    </alternativeName>
    <alternativeName>
        <fullName>Complex III subunit III</fullName>
    </alternativeName>
    <alternativeName>
        <fullName>Cytochrome b-c1 complex subunit 3</fullName>
    </alternativeName>
    <alternativeName>
        <fullName>Ubiquinol-cytochrome-c reductase complex cytochrome b subunit</fullName>
    </alternativeName>
</protein>